<comment type="catalytic activity">
    <reaction>
        <text>Endohydrolysis of (1-&gt;4)-beta-D-glucosidic linkages in cellulose, lichenin and cereal beta-D-glucans.</text>
        <dbReference type="EC" id="3.2.1.4"/>
    </reaction>
</comment>
<comment type="similarity">
    <text evidence="4">Belongs to the glycosyl hydrolase 5 (cellulase A) family.</text>
</comment>
<gene>
    <name type="primary">celC</name>
</gene>
<evidence type="ECO:0000250" key="1">
    <source>
        <dbReference type="UniProtKB" id="O85465"/>
    </source>
</evidence>
<evidence type="ECO:0000255" key="2"/>
<evidence type="ECO:0000256" key="3">
    <source>
        <dbReference type="SAM" id="MobiDB-lite"/>
    </source>
</evidence>
<evidence type="ECO:0000305" key="4"/>
<reference key="1">
    <citation type="journal article" date="1989" name="Gene">
        <title>The third cellulase of alkalophilic Bacillus sp. strain N-4: evolutionary relationships within the cel gene family.</title>
        <authorList>
            <person name="Fukumori F."/>
            <person name="Kudo T."/>
            <person name="Sashihara N."/>
            <person name="Nagata Y."/>
            <person name="Ito K."/>
            <person name="Horikoshi K."/>
        </authorList>
    </citation>
    <scope>NUCLEOTIDE SEQUENCE [GENOMIC DNA]</scope>
</reference>
<name>GUN3_EVAC2</name>
<protein>
    <recommendedName>
        <fullName>Endoglucanase C</fullName>
        <ecNumber>3.2.1.4</ecNumber>
    </recommendedName>
    <alternativeName>
        <fullName>Cellulase C</fullName>
    </alternativeName>
    <alternativeName>
        <fullName>Endo-1,4-beta-glucanase C</fullName>
    </alternativeName>
</protein>
<keyword id="KW-0119">Carbohydrate metabolism</keyword>
<keyword id="KW-0136">Cellulose degradation</keyword>
<keyword id="KW-0326">Glycosidase</keyword>
<keyword id="KW-0378">Hydrolase</keyword>
<keyword id="KW-0624">Polysaccharide degradation</keyword>
<keyword id="KW-0732">Signal</keyword>
<proteinExistence type="inferred from homology"/>
<dbReference type="EC" id="3.2.1.4"/>
<dbReference type="EMBL" id="M25500">
    <property type="protein sequence ID" value="AAA22306.1"/>
    <property type="molecule type" value="Genomic_DNA"/>
</dbReference>
<dbReference type="PIR" id="JS0174">
    <property type="entry name" value="JS0174"/>
</dbReference>
<dbReference type="SMR" id="P19570"/>
<dbReference type="STRING" id="649639.Bcell_3370"/>
<dbReference type="CAZy" id="CBM17">
    <property type="family name" value="Carbohydrate-Binding Module Family 17"/>
</dbReference>
<dbReference type="CAZy" id="CBM28">
    <property type="family name" value="Carbohydrate-Binding Module Family 28"/>
</dbReference>
<dbReference type="CAZy" id="GH5">
    <property type="family name" value="Glycoside Hydrolase Family 5"/>
</dbReference>
<dbReference type="eggNOG" id="COG2730">
    <property type="taxonomic scope" value="Bacteria"/>
</dbReference>
<dbReference type="GO" id="GO:0008810">
    <property type="term" value="F:cellulase activity"/>
    <property type="evidence" value="ECO:0007669"/>
    <property type="project" value="UniProtKB-EC"/>
</dbReference>
<dbReference type="GO" id="GO:0030245">
    <property type="term" value="P:cellulose catabolic process"/>
    <property type="evidence" value="ECO:0007669"/>
    <property type="project" value="UniProtKB-KW"/>
</dbReference>
<dbReference type="Gene3D" id="2.60.120.260">
    <property type="entry name" value="Galactose-binding domain-like"/>
    <property type="match status" value="2"/>
</dbReference>
<dbReference type="Gene3D" id="3.20.20.80">
    <property type="entry name" value="Glycosidases"/>
    <property type="match status" value="1"/>
</dbReference>
<dbReference type="InterPro" id="IPR005086">
    <property type="entry name" value="CBM17/28"/>
</dbReference>
<dbReference type="InterPro" id="IPR008979">
    <property type="entry name" value="Galactose-bd-like_sf"/>
</dbReference>
<dbReference type="InterPro" id="IPR001547">
    <property type="entry name" value="Glyco_hydro_5"/>
</dbReference>
<dbReference type="InterPro" id="IPR018087">
    <property type="entry name" value="Glyco_hydro_5_CS"/>
</dbReference>
<dbReference type="InterPro" id="IPR017853">
    <property type="entry name" value="Glycoside_hydrolase_SF"/>
</dbReference>
<dbReference type="PANTHER" id="PTHR34142">
    <property type="entry name" value="ENDO-BETA-1,4-GLUCANASE A"/>
    <property type="match status" value="1"/>
</dbReference>
<dbReference type="PANTHER" id="PTHR34142:SF1">
    <property type="entry name" value="GLYCOSIDE HYDROLASE FAMILY 5 DOMAIN-CONTAINING PROTEIN"/>
    <property type="match status" value="1"/>
</dbReference>
<dbReference type="Pfam" id="PF03424">
    <property type="entry name" value="CBM_17_28"/>
    <property type="match status" value="2"/>
</dbReference>
<dbReference type="Pfam" id="PF00150">
    <property type="entry name" value="Cellulase"/>
    <property type="match status" value="1"/>
</dbReference>
<dbReference type="SUPFAM" id="SSF51445">
    <property type="entry name" value="(Trans)glycosidases"/>
    <property type="match status" value="1"/>
</dbReference>
<dbReference type="SUPFAM" id="SSF49785">
    <property type="entry name" value="Galactose-binding domain-like"/>
    <property type="match status" value="2"/>
</dbReference>
<dbReference type="PROSITE" id="PS00659">
    <property type="entry name" value="GLYCOSYL_HYDROL_F5"/>
    <property type="match status" value="1"/>
</dbReference>
<organism>
    <name type="scientific">Evansella cellulosilytica (strain ATCC 21833 / DSM 2522 / FERM P-1141 / JCM 9156 / N-4)</name>
    <name type="common">Bacillus cellulosilyticus</name>
    <dbReference type="NCBI Taxonomy" id="649639"/>
    <lineage>
        <taxon>Bacteria</taxon>
        <taxon>Bacillati</taxon>
        <taxon>Bacillota</taxon>
        <taxon>Bacilli</taxon>
        <taxon>Bacillales</taxon>
        <taxon>Bacillaceae</taxon>
        <taxon>Evansella</taxon>
    </lineage>
</organism>
<accession>P19570</accession>
<feature type="signal peptide" evidence="2">
    <location>
        <begin position="1"/>
        <end position="28"/>
    </location>
</feature>
<feature type="chain" id="PRO_0000007836" description="Endoglucanase C">
    <location>
        <begin position="29"/>
        <end position="825"/>
    </location>
</feature>
<feature type="region of interest" description="Disordered" evidence="3">
    <location>
        <begin position="607"/>
        <end position="635"/>
    </location>
</feature>
<feature type="compositionally biased region" description="Basic and acidic residues" evidence="3">
    <location>
        <begin position="607"/>
        <end position="621"/>
    </location>
</feature>
<feature type="active site" description="Proton donor" evidence="1">
    <location>
        <position position="219"/>
    </location>
</feature>
<feature type="active site" description="Nucleophile" evidence="1">
    <location>
        <position position="335"/>
    </location>
</feature>
<sequence>MRNKLRRLLAIMMAVLLITSLFAPMVSAEEGDNGDDDDLVTPIEIEERPHESNYEKYPALLDGGLDERRPSEAGALQLVEVDGQVTLADQDGVPIQLRGMSTHGLQWFGEIVNENAFAALANDWGSNVIRLALYIGENAYRYNPDLIEKVYAGIELAKENDMYVIIDWHVHAPGDPNADIYQGGVNEDGEEYLGAKDFFLHIAEKYPNDPHLIYELANEPSSNSSGGPGITNDEDGWEAVREYAQPIVDALRDSGNAEDNIIIVGSPNWSQRMDLAAADNPIDDHHTMYTLHFYTGTHEGTNESYPEGISSEDRSNVMANAKYALDKGKAIFATEWGVSEADGNNGPYLNEADVWLNFLNENNISWTNWSLTNKNETSGAFTPFILNESDATDLDPGEDQVWSMEELSVSGEYVRSRILGEEYQPIDRTPREEFSEVIWDFNDGTTQGFVQNSDSPLDVTIENVNDALQITGLDESNAIAGEEEDYWSNVRISADEWEETFDILGAEELSMDVVVDDPTTVAIAAIPQSSAHEWANASNSVLITEDDFEEQEDGTYKALLTITGEDAPNLTNIAEDPEGSELNNIILFVGTENADVISLDNITVTGDRESVPEPVEHDTKGDSALPSDFEDGTRQGWEWDSESAVRTALTIEEANGSNALSWEYAYPEVKPSDDWATAPRLTLYKDDLVRGDYEFVAFDFYIDPIEDRATEGAIDINLIFQPPAAGYWAQASETFEIDLEELDSATVTDDGLYHYEVEINIEDIENDIELRNLMLIFADDESDFAGRVFLDNVRMDMSLETKVEVLERNINELQEQLVEVEALMR</sequence>